<name>RIMO_NOSS1</name>
<accession>Q8YXJ1</accession>
<keyword id="KW-0004">4Fe-4S</keyword>
<keyword id="KW-0963">Cytoplasm</keyword>
<keyword id="KW-0408">Iron</keyword>
<keyword id="KW-0411">Iron-sulfur</keyword>
<keyword id="KW-0479">Metal-binding</keyword>
<keyword id="KW-1185">Reference proteome</keyword>
<keyword id="KW-0949">S-adenosyl-L-methionine</keyword>
<keyword id="KW-0808">Transferase</keyword>
<reference key="1">
    <citation type="journal article" date="2001" name="DNA Res.">
        <title>Complete genomic sequence of the filamentous nitrogen-fixing cyanobacterium Anabaena sp. strain PCC 7120.</title>
        <authorList>
            <person name="Kaneko T."/>
            <person name="Nakamura Y."/>
            <person name="Wolk C.P."/>
            <person name="Kuritz T."/>
            <person name="Sasamoto S."/>
            <person name="Watanabe A."/>
            <person name="Iriguchi M."/>
            <person name="Ishikawa A."/>
            <person name="Kawashima K."/>
            <person name="Kimura T."/>
            <person name="Kishida Y."/>
            <person name="Kohara M."/>
            <person name="Matsumoto M."/>
            <person name="Matsuno A."/>
            <person name="Muraki A."/>
            <person name="Nakazaki N."/>
            <person name="Shimpo S."/>
            <person name="Sugimoto M."/>
            <person name="Takazawa M."/>
            <person name="Yamada M."/>
            <person name="Yasuda M."/>
            <person name="Tabata S."/>
        </authorList>
    </citation>
    <scope>NUCLEOTIDE SEQUENCE [LARGE SCALE GENOMIC DNA]</scope>
    <source>
        <strain>PCC 7120 / SAG 25.82 / UTEX 2576</strain>
    </source>
</reference>
<organism>
    <name type="scientific">Nostoc sp. (strain PCC 7120 / SAG 25.82 / UTEX 2576)</name>
    <dbReference type="NCBI Taxonomy" id="103690"/>
    <lineage>
        <taxon>Bacteria</taxon>
        <taxon>Bacillati</taxon>
        <taxon>Cyanobacteriota</taxon>
        <taxon>Cyanophyceae</taxon>
        <taxon>Nostocales</taxon>
        <taxon>Nostocaceae</taxon>
        <taxon>Nostoc</taxon>
    </lineage>
</organism>
<proteinExistence type="inferred from homology"/>
<comment type="function">
    <text evidence="1">Catalyzes the methylthiolation of an aspartic acid residue of ribosomal protein uS12.</text>
</comment>
<comment type="catalytic activity">
    <reaction evidence="1">
        <text>L-aspartate(89)-[ribosomal protein uS12]-hydrogen + (sulfur carrier)-SH + AH2 + 2 S-adenosyl-L-methionine = 3-methylsulfanyl-L-aspartate(89)-[ribosomal protein uS12]-hydrogen + (sulfur carrier)-H + 5'-deoxyadenosine + L-methionine + A + S-adenosyl-L-homocysteine + 2 H(+)</text>
        <dbReference type="Rhea" id="RHEA:37087"/>
        <dbReference type="Rhea" id="RHEA-COMP:10460"/>
        <dbReference type="Rhea" id="RHEA-COMP:10461"/>
        <dbReference type="Rhea" id="RHEA-COMP:14737"/>
        <dbReference type="Rhea" id="RHEA-COMP:14739"/>
        <dbReference type="ChEBI" id="CHEBI:13193"/>
        <dbReference type="ChEBI" id="CHEBI:15378"/>
        <dbReference type="ChEBI" id="CHEBI:17319"/>
        <dbReference type="ChEBI" id="CHEBI:17499"/>
        <dbReference type="ChEBI" id="CHEBI:29917"/>
        <dbReference type="ChEBI" id="CHEBI:29961"/>
        <dbReference type="ChEBI" id="CHEBI:57844"/>
        <dbReference type="ChEBI" id="CHEBI:57856"/>
        <dbReference type="ChEBI" id="CHEBI:59789"/>
        <dbReference type="ChEBI" id="CHEBI:64428"/>
        <dbReference type="ChEBI" id="CHEBI:73599"/>
        <dbReference type="EC" id="2.8.4.4"/>
    </reaction>
</comment>
<comment type="cofactor">
    <cofactor evidence="1">
        <name>[4Fe-4S] cluster</name>
        <dbReference type="ChEBI" id="CHEBI:49883"/>
    </cofactor>
    <text evidence="1">Binds 2 [4Fe-4S] clusters. One cluster is coordinated with 3 cysteines and an exchangeable S-adenosyl-L-methionine.</text>
</comment>
<comment type="subcellular location">
    <subcellularLocation>
        <location evidence="1">Cytoplasm</location>
    </subcellularLocation>
</comment>
<comment type="similarity">
    <text evidence="1">Belongs to the methylthiotransferase family. RimO subfamily.</text>
</comment>
<evidence type="ECO:0000255" key="1">
    <source>
        <dbReference type="HAMAP-Rule" id="MF_01865"/>
    </source>
</evidence>
<evidence type="ECO:0000255" key="2">
    <source>
        <dbReference type="PROSITE-ProRule" id="PRU01266"/>
    </source>
</evidence>
<dbReference type="EC" id="2.8.4.4" evidence="1"/>
<dbReference type="EMBL" id="BA000019">
    <property type="protein sequence ID" value="BAB73179.1"/>
    <property type="molecule type" value="Genomic_DNA"/>
</dbReference>
<dbReference type="PIR" id="AC1959">
    <property type="entry name" value="AC1959"/>
</dbReference>
<dbReference type="RefSeq" id="WP_010995394.1">
    <property type="nucleotide sequence ID" value="NZ_RSCN01000021.1"/>
</dbReference>
<dbReference type="SMR" id="Q8YXJ1"/>
<dbReference type="STRING" id="103690.gene:10493236"/>
<dbReference type="KEGG" id="ana:alr1222"/>
<dbReference type="eggNOG" id="COG0621">
    <property type="taxonomic scope" value="Bacteria"/>
</dbReference>
<dbReference type="OrthoDB" id="9805215at2"/>
<dbReference type="Proteomes" id="UP000002483">
    <property type="component" value="Chromosome"/>
</dbReference>
<dbReference type="GO" id="GO:0005829">
    <property type="term" value="C:cytosol"/>
    <property type="evidence" value="ECO:0007669"/>
    <property type="project" value="TreeGrafter"/>
</dbReference>
<dbReference type="GO" id="GO:0051539">
    <property type="term" value="F:4 iron, 4 sulfur cluster binding"/>
    <property type="evidence" value="ECO:0007669"/>
    <property type="project" value="UniProtKB-UniRule"/>
</dbReference>
<dbReference type="GO" id="GO:0035599">
    <property type="term" value="F:aspartic acid methylthiotransferase activity"/>
    <property type="evidence" value="ECO:0007669"/>
    <property type="project" value="TreeGrafter"/>
</dbReference>
<dbReference type="GO" id="GO:0046872">
    <property type="term" value="F:metal ion binding"/>
    <property type="evidence" value="ECO:0007669"/>
    <property type="project" value="UniProtKB-KW"/>
</dbReference>
<dbReference type="GO" id="GO:0103039">
    <property type="term" value="F:protein methylthiotransferase activity"/>
    <property type="evidence" value="ECO:0007669"/>
    <property type="project" value="UniProtKB-EC"/>
</dbReference>
<dbReference type="GO" id="GO:0006400">
    <property type="term" value="P:tRNA modification"/>
    <property type="evidence" value="ECO:0007669"/>
    <property type="project" value="InterPro"/>
</dbReference>
<dbReference type="CDD" id="cd01335">
    <property type="entry name" value="Radical_SAM"/>
    <property type="match status" value="1"/>
</dbReference>
<dbReference type="FunFam" id="3.40.50.12160:FF:000002">
    <property type="entry name" value="Ribosomal protein S12 methylthiotransferase RimO"/>
    <property type="match status" value="1"/>
</dbReference>
<dbReference type="FunFam" id="3.80.30.20:FF:000001">
    <property type="entry name" value="tRNA-2-methylthio-N(6)-dimethylallyladenosine synthase 2"/>
    <property type="match status" value="1"/>
</dbReference>
<dbReference type="Gene3D" id="3.40.50.12160">
    <property type="entry name" value="Methylthiotransferase, N-terminal domain"/>
    <property type="match status" value="1"/>
</dbReference>
<dbReference type="Gene3D" id="2.40.50.140">
    <property type="entry name" value="Nucleic acid-binding proteins"/>
    <property type="match status" value="1"/>
</dbReference>
<dbReference type="Gene3D" id="3.80.30.20">
    <property type="entry name" value="tm_1862 like domain"/>
    <property type="match status" value="1"/>
</dbReference>
<dbReference type="HAMAP" id="MF_01865">
    <property type="entry name" value="MTTase_RimO"/>
    <property type="match status" value="1"/>
</dbReference>
<dbReference type="InterPro" id="IPR006638">
    <property type="entry name" value="Elp3/MiaA/NifB-like_rSAM"/>
</dbReference>
<dbReference type="InterPro" id="IPR005839">
    <property type="entry name" value="Methylthiotransferase"/>
</dbReference>
<dbReference type="InterPro" id="IPR020612">
    <property type="entry name" value="Methylthiotransferase_CS"/>
</dbReference>
<dbReference type="InterPro" id="IPR013848">
    <property type="entry name" value="Methylthiotransferase_N"/>
</dbReference>
<dbReference type="InterPro" id="IPR038135">
    <property type="entry name" value="Methylthiotransferase_N_sf"/>
</dbReference>
<dbReference type="InterPro" id="IPR012340">
    <property type="entry name" value="NA-bd_OB-fold"/>
</dbReference>
<dbReference type="InterPro" id="IPR005840">
    <property type="entry name" value="Ribosomal_uS12_MeSTrfase_RimO"/>
</dbReference>
<dbReference type="InterPro" id="IPR007197">
    <property type="entry name" value="rSAM"/>
</dbReference>
<dbReference type="InterPro" id="IPR023404">
    <property type="entry name" value="rSAM_horseshoe"/>
</dbReference>
<dbReference type="InterPro" id="IPR002792">
    <property type="entry name" value="TRAM_dom"/>
</dbReference>
<dbReference type="NCBIfam" id="TIGR01125">
    <property type="entry name" value="30S ribosomal protein S12 methylthiotransferase RimO"/>
    <property type="match status" value="1"/>
</dbReference>
<dbReference type="NCBIfam" id="TIGR00089">
    <property type="entry name" value="MiaB/RimO family radical SAM methylthiotransferase"/>
    <property type="match status" value="1"/>
</dbReference>
<dbReference type="PANTHER" id="PTHR43837">
    <property type="entry name" value="RIBOSOMAL PROTEIN S12 METHYLTHIOTRANSFERASE RIMO"/>
    <property type="match status" value="1"/>
</dbReference>
<dbReference type="PANTHER" id="PTHR43837:SF1">
    <property type="entry name" value="RIBOSOMAL PROTEIN US12 METHYLTHIOTRANSFERASE RIMO"/>
    <property type="match status" value="1"/>
</dbReference>
<dbReference type="Pfam" id="PF04055">
    <property type="entry name" value="Radical_SAM"/>
    <property type="match status" value="1"/>
</dbReference>
<dbReference type="Pfam" id="PF18693">
    <property type="entry name" value="TRAM_2"/>
    <property type="match status" value="1"/>
</dbReference>
<dbReference type="Pfam" id="PF00919">
    <property type="entry name" value="UPF0004"/>
    <property type="match status" value="1"/>
</dbReference>
<dbReference type="SFLD" id="SFLDG01082">
    <property type="entry name" value="B12-binding_domain_containing"/>
    <property type="match status" value="1"/>
</dbReference>
<dbReference type="SFLD" id="SFLDS00029">
    <property type="entry name" value="Radical_SAM"/>
    <property type="match status" value="1"/>
</dbReference>
<dbReference type="SFLD" id="SFLDF00274">
    <property type="entry name" value="ribosomal_protein_S12_methylth"/>
    <property type="match status" value="1"/>
</dbReference>
<dbReference type="SMART" id="SM00729">
    <property type="entry name" value="Elp3"/>
    <property type="match status" value="1"/>
</dbReference>
<dbReference type="SUPFAM" id="SSF102114">
    <property type="entry name" value="Radical SAM enzymes"/>
    <property type="match status" value="1"/>
</dbReference>
<dbReference type="PROSITE" id="PS51449">
    <property type="entry name" value="MTTASE_N"/>
    <property type="match status" value="1"/>
</dbReference>
<dbReference type="PROSITE" id="PS01278">
    <property type="entry name" value="MTTASE_RADICAL"/>
    <property type="match status" value="1"/>
</dbReference>
<dbReference type="PROSITE" id="PS51918">
    <property type="entry name" value="RADICAL_SAM"/>
    <property type="match status" value="1"/>
</dbReference>
<dbReference type="PROSITE" id="PS50926">
    <property type="entry name" value="TRAM"/>
    <property type="match status" value="1"/>
</dbReference>
<protein>
    <recommendedName>
        <fullName evidence="1">Ribosomal protein uS12 methylthiotransferase RimO</fullName>
        <shortName evidence="1">uS12 MTTase</shortName>
        <shortName evidence="1">uS12 methylthiotransferase</shortName>
        <ecNumber evidence="1">2.8.4.4</ecNumber>
    </recommendedName>
    <alternativeName>
        <fullName evidence="1">Ribosomal protein uS12 (aspartate-C(3))-methylthiotransferase</fullName>
    </alternativeName>
    <alternativeName>
        <fullName evidence="1">Ribosome maturation factor RimO</fullName>
    </alternativeName>
</protein>
<feature type="chain" id="PRO_0000374696" description="Ribosomal protein uS12 methylthiotransferase RimO">
    <location>
        <begin position="1"/>
        <end position="440"/>
    </location>
</feature>
<feature type="domain" description="MTTase N-terminal" evidence="1">
    <location>
        <begin position="5"/>
        <end position="116"/>
    </location>
</feature>
<feature type="domain" description="Radical SAM core" evidence="2">
    <location>
        <begin position="140"/>
        <end position="370"/>
    </location>
</feature>
<feature type="domain" description="TRAM" evidence="1">
    <location>
        <begin position="372"/>
        <end position="438"/>
    </location>
</feature>
<feature type="binding site" evidence="1">
    <location>
        <position position="14"/>
    </location>
    <ligand>
        <name>[4Fe-4S] cluster</name>
        <dbReference type="ChEBI" id="CHEBI:49883"/>
        <label>1</label>
    </ligand>
</feature>
<feature type="binding site" evidence="1">
    <location>
        <position position="50"/>
    </location>
    <ligand>
        <name>[4Fe-4S] cluster</name>
        <dbReference type="ChEBI" id="CHEBI:49883"/>
        <label>1</label>
    </ligand>
</feature>
<feature type="binding site" evidence="1">
    <location>
        <position position="79"/>
    </location>
    <ligand>
        <name>[4Fe-4S] cluster</name>
        <dbReference type="ChEBI" id="CHEBI:49883"/>
        <label>1</label>
    </ligand>
</feature>
<feature type="binding site" evidence="1">
    <location>
        <position position="154"/>
    </location>
    <ligand>
        <name>[4Fe-4S] cluster</name>
        <dbReference type="ChEBI" id="CHEBI:49883"/>
        <label>2</label>
        <note>4Fe-4S-S-AdoMet</note>
    </ligand>
</feature>
<feature type="binding site" evidence="1">
    <location>
        <position position="158"/>
    </location>
    <ligand>
        <name>[4Fe-4S] cluster</name>
        <dbReference type="ChEBI" id="CHEBI:49883"/>
        <label>2</label>
        <note>4Fe-4S-S-AdoMet</note>
    </ligand>
</feature>
<feature type="binding site" evidence="1">
    <location>
        <position position="161"/>
    </location>
    <ligand>
        <name>[4Fe-4S] cluster</name>
        <dbReference type="ChEBI" id="CHEBI:49883"/>
        <label>2</label>
        <note>4Fe-4S-S-AdoMet</note>
    </ligand>
</feature>
<sequence length="440" mass="49269">MGEKPTIAISHLGCEKNRIDTEHMLGLLVKAGYGVDTNEELADYVIVNTCSFIESAREESVRTLVELAEANKKIVITGCMAQHFQTQLLEELPEAVAVVGTGDYHKIVSVIERAEQGERVTLVSAEPTYIADETTPRYRTTTEGVAYLRVAEGCDYRCAFCIIPHLRGNQRSRTIESIVAEAEQLVAQGVQEIILISQITTNYGLDIYGKPKLAELLRALGKINVPWIRMHYAYPTGLTPDVIAAIQETPNVLPYLDLPLQHSHSEVLRSMNRPWQGRVNDEIIERLKIAIPGAVLRTTFIVGFPGETEAQFEHLLQFVQRHEFDHVGVFTFSAEEGTPAYKLPNQLPQEVMDERRDRLMALQQPISWRKNQQEVGKTVEVLIEQENPESGKLIGRSGRFSPEVDGQVYVDGEAKLGTIIPVKIHSADEYDLFGQVVSHN</sequence>
<gene>
    <name evidence="1" type="primary">rimO</name>
    <name type="ordered locus">alr1222</name>
</gene>